<proteinExistence type="inferred from homology"/>
<comment type="function">
    <text evidence="1">Required for the assembly of the mitochondrial respiratory chain complex IV (CIV), also known as cytochrome c oxidase. Promotes the insertion of copper into the active site of cytochrome c oxidase subunit II (MT-CO2/COX2). Interacts specifically with newly synthesized MT-CO2/COX and its copper center-forming metallochaperones SCO1, SCO2 and COA6. Probably facilitates MT-CO2/COX2 association with the MITRAC assembly intermediate containing MT-CO1/COX1, thereby participating in merging the MT-CO1/COX1 and MT-CO2/COX2 assembly lines.</text>
</comment>
<comment type="subunit">
    <text evidence="1">Associates with the MITRAC complex. Interacts with MT-CO2/COX; specifically interacts with newly synthesized MT-CO2/COX. Interacts with SCO1, SCO2 and COA6.</text>
</comment>
<comment type="subcellular location">
    <subcellularLocation>
        <location evidence="1">Mitochondrion inner membrane</location>
        <topology evidence="1">Single-pass membrane protein</topology>
    </subcellularLocation>
</comment>
<comment type="alternative products">
    <event type="alternative splicing"/>
    <isoform>
        <id>Q9CR63-1</id>
        <name>1</name>
        <sequence type="displayed"/>
    </isoform>
    <isoform>
        <id>Q9CR63-2</id>
        <name>2</name>
        <sequence type="described" ref="VSP_014603"/>
    </isoform>
</comment>
<comment type="similarity">
    <text evidence="6">Belongs to the COX16 family.</text>
</comment>
<dbReference type="EMBL" id="AK007450">
    <property type="protein sequence ID" value="BAB25045.1"/>
    <property type="molecule type" value="mRNA"/>
</dbReference>
<dbReference type="EMBL" id="AK007562">
    <property type="protein sequence ID" value="BAB25110.1"/>
    <property type="molecule type" value="mRNA"/>
</dbReference>
<dbReference type="EMBL" id="AK008486">
    <property type="protein sequence ID" value="BAB25693.1"/>
    <property type="molecule type" value="mRNA"/>
</dbReference>
<dbReference type="EMBL" id="AK040003">
    <property type="protein sequence ID" value="BAC30495.1"/>
    <property type="molecule type" value="mRNA"/>
</dbReference>
<dbReference type="EMBL" id="AK079975">
    <property type="protein sequence ID" value="BAC37796.1"/>
    <property type="molecule type" value="mRNA"/>
</dbReference>
<dbReference type="EMBL" id="AK082374">
    <property type="protein sequence ID" value="BAC38480.1"/>
    <property type="molecule type" value="mRNA"/>
</dbReference>
<dbReference type="EMBL" id="AK087666">
    <property type="protein sequence ID" value="BAC39960.1"/>
    <property type="molecule type" value="mRNA"/>
</dbReference>
<dbReference type="EMBL" id="AK088794">
    <property type="protein sequence ID" value="BAC40576.1"/>
    <property type="molecule type" value="mRNA"/>
</dbReference>
<dbReference type="EMBL" id="BC005675">
    <property type="protein sequence ID" value="AAH05675.1"/>
    <property type="molecule type" value="mRNA"/>
</dbReference>
<dbReference type="CCDS" id="CCDS26020.1">
    <molecule id="Q9CR63-1"/>
</dbReference>
<dbReference type="CCDS" id="CCDS83976.1">
    <molecule id="Q9CR63-2"/>
</dbReference>
<dbReference type="RefSeq" id="NP_001296737.1">
    <property type="nucleotide sequence ID" value="NM_001309808.1"/>
</dbReference>
<dbReference type="RefSeq" id="NP_001296738.1">
    <molecule id="Q9CR63-2"/>
    <property type="nucleotide sequence ID" value="NM_001309809.2"/>
</dbReference>
<dbReference type="RefSeq" id="NP_001296739.1">
    <property type="nucleotide sequence ID" value="NM_001309810.2"/>
</dbReference>
<dbReference type="RefSeq" id="NP_079737.1">
    <molecule id="Q9CR63-1"/>
    <property type="nucleotide sequence ID" value="NM_025461.6"/>
</dbReference>
<dbReference type="FunCoup" id="Q9CR63">
    <property type="interactions" value="692"/>
</dbReference>
<dbReference type="STRING" id="10090.ENSMUSP00000002757"/>
<dbReference type="PhosphoSitePlus" id="Q9CR63"/>
<dbReference type="SwissPalm" id="Q9CR63"/>
<dbReference type="PaxDb" id="10090-ENSMUSP00000002757"/>
<dbReference type="PeptideAtlas" id="Q9CR63"/>
<dbReference type="ProteomicsDB" id="284147">
    <molecule id="Q9CR63-1"/>
</dbReference>
<dbReference type="ProteomicsDB" id="284148">
    <molecule id="Q9CR63-2"/>
</dbReference>
<dbReference type="Pumba" id="Q9CR63"/>
<dbReference type="Antibodypedia" id="25128">
    <property type="antibodies" value="57 antibodies from 17 providers"/>
</dbReference>
<dbReference type="DNASU" id="66272"/>
<dbReference type="Ensembl" id="ENSMUST00000002757.11">
    <molecule id="Q9CR63-1"/>
    <property type="protein sequence ID" value="ENSMUSP00000002757.4"/>
    <property type="gene ID" value="ENSMUSG00000091803.8"/>
</dbReference>
<dbReference type="Ensembl" id="ENSMUST00000110340.9">
    <molecule id="Q9CR63-2"/>
    <property type="protein sequence ID" value="ENSMUSP00000105969.3"/>
    <property type="gene ID" value="ENSMUSG00000091803.8"/>
</dbReference>
<dbReference type="GeneID" id="66272"/>
<dbReference type="KEGG" id="mmu:66272"/>
<dbReference type="UCSC" id="uc007oce.1">
    <molecule id="Q9CR63-1"/>
    <property type="organism name" value="mouse"/>
</dbReference>
<dbReference type="AGR" id="MGI:1913522"/>
<dbReference type="CTD" id="51241"/>
<dbReference type="MGI" id="MGI:1913522">
    <property type="gene designation" value="Cox16"/>
</dbReference>
<dbReference type="VEuPathDB" id="HostDB:ENSMUSG00000091803"/>
<dbReference type="eggNOG" id="ENOG502S3RD">
    <property type="taxonomic scope" value="Eukaryota"/>
</dbReference>
<dbReference type="GeneTree" id="ENSGT00520000055955"/>
<dbReference type="HOGENOM" id="CLU_163592_0_0_1"/>
<dbReference type="InParanoid" id="Q9CR63"/>
<dbReference type="OMA" id="FKYGVPF"/>
<dbReference type="OrthoDB" id="5516033at2759"/>
<dbReference type="PhylomeDB" id="Q9CR63"/>
<dbReference type="TreeFam" id="TF324420"/>
<dbReference type="Reactome" id="R-MMU-9864848">
    <property type="pathway name" value="Complex IV assembly"/>
</dbReference>
<dbReference type="BioGRID-ORCS" id="66272">
    <property type="hits" value="16 hits in 78 CRISPR screens"/>
</dbReference>
<dbReference type="PRO" id="PR:Q9CR63"/>
<dbReference type="Proteomes" id="UP000000589">
    <property type="component" value="Chromosome 12"/>
</dbReference>
<dbReference type="RNAct" id="Q9CR63">
    <property type="molecule type" value="protein"/>
</dbReference>
<dbReference type="Bgee" id="ENSMUSG00000091803">
    <property type="expression patterns" value="Expressed in spermatocyte and 236 other cell types or tissues"/>
</dbReference>
<dbReference type="ExpressionAtlas" id="Q9CR63">
    <property type="expression patterns" value="baseline and differential"/>
</dbReference>
<dbReference type="GO" id="GO:0005743">
    <property type="term" value="C:mitochondrial inner membrane"/>
    <property type="evidence" value="ECO:0000250"/>
    <property type="project" value="UniProtKB"/>
</dbReference>
<dbReference type="GO" id="GO:0005739">
    <property type="term" value="C:mitochondrion"/>
    <property type="evidence" value="ECO:0007005"/>
    <property type="project" value="MGI"/>
</dbReference>
<dbReference type="GO" id="GO:0033617">
    <property type="term" value="P:mitochondrial cytochrome c oxidase assembly"/>
    <property type="evidence" value="ECO:0000250"/>
    <property type="project" value="UniProtKB"/>
</dbReference>
<dbReference type="InterPro" id="IPR020164">
    <property type="entry name" value="Cyt_c_Oxase_assmbl_COX16"/>
</dbReference>
<dbReference type="PANTHER" id="PTHR17130:SF14">
    <property type="entry name" value="CYTOCHROME C OXIDASE ASSEMBLY PROTEIN COX16 HOMOLOG, MITOCHONDRIAL"/>
    <property type="match status" value="1"/>
</dbReference>
<dbReference type="PANTHER" id="PTHR17130">
    <property type="entry name" value="MITOCHONDRIAL OUTER MEMBRANE PROTEIN 25"/>
    <property type="match status" value="1"/>
</dbReference>
<dbReference type="Pfam" id="PF14138">
    <property type="entry name" value="COX16"/>
    <property type="match status" value="1"/>
</dbReference>
<sequence length="106" mass="12266">MIAPAVLRALRKNKTLRYGVPMLLLVVGGSFGLREFSQIRYDAVTIKIDPELEKKLKVNKITLESEYEKIKDSTFENWKNIRGPRPWEDPQLLQGRNPETLKPKTT</sequence>
<protein>
    <recommendedName>
        <fullName evidence="6">Cytochrome c oxidase assembly protein COX16 homolog, mitochondrial</fullName>
    </recommendedName>
</protein>
<name>COX16_MOUSE</name>
<evidence type="ECO:0000250" key="1">
    <source>
        <dbReference type="UniProtKB" id="Q9P0S2"/>
    </source>
</evidence>
<evidence type="ECO:0000255" key="2"/>
<evidence type="ECO:0000256" key="3">
    <source>
        <dbReference type="SAM" id="MobiDB-lite"/>
    </source>
</evidence>
<evidence type="ECO:0000303" key="4">
    <source>
    </source>
</evidence>
<evidence type="ECO:0000303" key="5">
    <source>
    </source>
</evidence>
<evidence type="ECO:0000305" key="6"/>
<evidence type="ECO:0000312" key="7">
    <source>
        <dbReference type="MGI" id="MGI:1913522"/>
    </source>
</evidence>
<reference key="1">
    <citation type="journal article" date="2005" name="Science">
        <title>The transcriptional landscape of the mammalian genome.</title>
        <authorList>
            <person name="Carninci P."/>
            <person name="Kasukawa T."/>
            <person name="Katayama S."/>
            <person name="Gough J."/>
            <person name="Frith M.C."/>
            <person name="Maeda N."/>
            <person name="Oyama R."/>
            <person name="Ravasi T."/>
            <person name="Lenhard B."/>
            <person name="Wells C."/>
            <person name="Kodzius R."/>
            <person name="Shimokawa K."/>
            <person name="Bajic V.B."/>
            <person name="Brenner S.E."/>
            <person name="Batalov S."/>
            <person name="Forrest A.R."/>
            <person name="Zavolan M."/>
            <person name="Davis M.J."/>
            <person name="Wilming L.G."/>
            <person name="Aidinis V."/>
            <person name="Allen J.E."/>
            <person name="Ambesi-Impiombato A."/>
            <person name="Apweiler R."/>
            <person name="Aturaliya R.N."/>
            <person name="Bailey T.L."/>
            <person name="Bansal M."/>
            <person name="Baxter L."/>
            <person name="Beisel K.W."/>
            <person name="Bersano T."/>
            <person name="Bono H."/>
            <person name="Chalk A.M."/>
            <person name="Chiu K.P."/>
            <person name="Choudhary V."/>
            <person name="Christoffels A."/>
            <person name="Clutterbuck D.R."/>
            <person name="Crowe M.L."/>
            <person name="Dalla E."/>
            <person name="Dalrymple B.P."/>
            <person name="de Bono B."/>
            <person name="Della Gatta G."/>
            <person name="di Bernardo D."/>
            <person name="Down T."/>
            <person name="Engstrom P."/>
            <person name="Fagiolini M."/>
            <person name="Faulkner G."/>
            <person name="Fletcher C.F."/>
            <person name="Fukushima T."/>
            <person name="Furuno M."/>
            <person name="Futaki S."/>
            <person name="Gariboldi M."/>
            <person name="Georgii-Hemming P."/>
            <person name="Gingeras T.R."/>
            <person name="Gojobori T."/>
            <person name="Green R.E."/>
            <person name="Gustincich S."/>
            <person name="Harbers M."/>
            <person name="Hayashi Y."/>
            <person name="Hensch T.K."/>
            <person name="Hirokawa N."/>
            <person name="Hill D."/>
            <person name="Huminiecki L."/>
            <person name="Iacono M."/>
            <person name="Ikeo K."/>
            <person name="Iwama A."/>
            <person name="Ishikawa T."/>
            <person name="Jakt M."/>
            <person name="Kanapin A."/>
            <person name="Katoh M."/>
            <person name="Kawasawa Y."/>
            <person name="Kelso J."/>
            <person name="Kitamura H."/>
            <person name="Kitano H."/>
            <person name="Kollias G."/>
            <person name="Krishnan S.P."/>
            <person name="Kruger A."/>
            <person name="Kummerfeld S.K."/>
            <person name="Kurochkin I.V."/>
            <person name="Lareau L.F."/>
            <person name="Lazarevic D."/>
            <person name="Lipovich L."/>
            <person name="Liu J."/>
            <person name="Liuni S."/>
            <person name="McWilliam S."/>
            <person name="Madan Babu M."/>
            <person name="Madera M."/>
            <person name="Marchionni L."/>
            <person name="Matsuda H."/>
            <person name="Matsuzawa S."/>
            <person name="Miki H."/>
            <person name="Mignone F."/>
            <person name="Miyake S."/>
            <person name="Morris K."/>
            <person name="Mottagui-Tabar S."/>
            <person name="Mulder N."/>
            <person name="Nakano N."/>
            <person name="Nakauchi H."/>
            <person name="Ng P."/>
            <person name="Nilsson R."/>
            <person name="Nishiguchi S."/>
            <person name="Nishikawa S."/>
            <person name="Nori F."/>
            <person name="Ohara O."/>
            <person name="Okazaki Y."/>
            <person name="Orlando V."/>
            <person name="Pang K.C."/>
            <person name="Pavan W.J."/>
            <person name="Pavesi G."/>
            <person name="Pesole G."/>
            <person name="Petrovsky N."/>
            <person name="Piazza S."/>
            <person name="Reed J."/>
            <person name="Reid J.F."/>
            <person name="Ring B.Z."/>
            <person name="Ringwald M."/>
            <person name="Rost B."/>
            <person name="Ruan Y."/>
            <person name="Salzberg S.L."/>
            <person name="Sandelin A."/>
            <person name="Schneider C."/>
            <person name="Schoenbach C."/>
            <person name="Sekiguchi K."/>
            <person name="Semple C.A."/>
            <person name="Seno S."/>
            <person name="Sessa L."/>
            <person name="Sheng Y."/>
            <person name="Shibata Y."/>
            <person name="Shimada H."/>
            <person name="Shimada K."/>
            <person name="Silva D."/>
            <person name="Sinclair B."/>
            <person name="Sperling S."/>
            <person name="Stupka E."/>
            <person name="Sugiura K."/>
            <person name="Sultana R."/>
            <person name="Takenaka Y."/>
            <person name="Taki K."/>
            <person name="Tammoja K."/>
            <person name="Tan S.L."/>
            <person name="Tang S."/>
            <person name="Taylor M.S."/>
            <person name="Tegner J."/>
            <person name="Teichmann S.A."/>
            <person name="Ueda H.R."/>
            <person name="van Nimwegen E."/>
            <person name="Verardo R."/>
            <person name="Wei C.L."/>
            <person name="Yagi K."/>
            <person name="Yamanishi H."/>
            <person name="Zabarovsky E."/>
            <person name="Zhu S."/>
            <person name="Zimmer A."/>
            <person name="Hide W."/>
            <person name="Bult C."/>
            <person name="Grimmond S.M."/>
            <person name="Teasdale R.D."/>
            <person name="Liu E.T."/>
            <person name="Brusic V."/>
            <person name="Quackenbush J."/>
            <person name="Wahlestedt C."/>
            <person name="Mattick J.S."/>
            <person name="Hume D.A."/>
            <person name="Kai C."/>
            <person name="Sasaki D."/>
            <person name="Tomaru Y."/>
            <person name="Fukuda S."/>
            <person name="Kanamori-Katayama M."/>
            <person name="Suzuki M."/>
            <person name="Aoki J."/>
            <person name="Arakawa T."/>
            <person name="Iida J."/>
            <person name="Imamura K."/>
            <person name="Itoh M."/>
            <person name="Kato T."/>
            <person name="Kawaji H."/>
            <person name="Kawagashira N."/>
            <person name="Kawashima T."/>
            <person name="Kojima M."/>
            <person name="Kondo S."/>
            <person name="Konno H."/>
            <person name="Nakano K."/>
            <person name="Ninomiya N."/>
            <person name="Nishio T."/>
            <person name="Okada M."/>
            <person name="Plessy C."/>
            <person name="Shibata K."/>
            <person name="Shiraki T."/>
            <person name="Suzuki S."/>
            <person name="Tagami M."/>
            <person name="Waki K."/>
            <person name="Watahiki A."/>
            <person name="Okamura-Oho Y."/>
            <person name="Suzuki H."/>
            <person name="Kawai J."/>
            <person name="Hayashizaki Y."/>
        </authorList>
    </citation>
    <scope>NUCLEOTIDE SEQUENCE [LARGE SCALE MRNA] (ISOFORMS 1 AND 2)</scope>
    <source>
        <strain>C57BL/6J</strain>
        <strain>NOD</strain>
        <tissue>Aorta</tissue>
        <tissue>Cerebellum</tissue>
        <tissue>Oviduct</tissue>
        <tissue>Pancreas</tissue>
        <tissue>Small intestine</tissue>
        <tissue>Thymus</tissue>
        <tissue>Vein</tissue>
    </source>
</reference>
<reference key="2">
    <citation type="journal article" date="2004" name="Genome Res.">
        <title>The status, quality, and expansion of the NIH full-length cDNA project: the Mammalian Gene Collection (MGC).</title>
        <authorList>
            <consortium name="The MGC Project Team"/>
        </authorList>
    </citation>
    <scope>NUCLEOTIDE SEQUENCE [LARGE SCALE MRNA] (ISOFORM 2)</scope>
    <source>
        <strain>FVB/N-3</strain>
        <tissue>Mammary tumor</tissue>
    </source>
</reference>
<gene>
    <name evidence="7" type="primary">Cox16</name>
</gene>
<keyword id="KW-0025">Alternative splicing</keyword>
<keyword id="KW-0472">Membrane</keyword>
<keyword id="KW-0496">Mitochondrion</keyword>
<keyword id="KW-0999">Mitochondrion inner membrane</keyword>
<keyword id="KW-1185">Reference proteome</keyword>
<keyword id="KW-0812">Transmembrane</keyword>
<keyword id="KW-1133">Transmembrane helix</keyword>
<organism>
    <name type="scientific">Mus musculus</name>
    <name type="common">Mouse</name>
    <dbReference type="NCBI Taxonomy" id="10090"/>
    <lineage>
        <taxon>Eukaryota</taxon>
        <taxon>Metazoa</taxon>
        <taxon>Chordata</taxon>
        <taxon>Craniata</taxon>
        <taxon>Vertebrata</taxon>
        <taxon>Euteleostomi</taxon>
        <taxon>Mammalia</taxon>
        <taxon>Eutheria</taxon>
        <taxon>Euarchontoglires</taxon>
        <taxon>Glires</taxon>
        <taxon>Rodentia</taxon>
        <taxon>Myomorpha</taxon>
        <taxon>Muroidea</taxon>
        <taxon>Muridae</taxon>
        <taxon>Murinae</taxon>
        <taxon>Mus</taxon>
        <taxon>Mus</taxon>
    </lineage>
</organism>
<feature type="chain" id="PRO_0000019557" description="Cytochrome c oxidase assembly protein COX16 homolog, mitochondrial">
    <location>
        <begin position="1"/>
        <end position="106"/>
    </location>
</feature>
<feature type="topological domain" description="Mitochondrial matrix" evidence="1">
    <location>
        <begin position="1"/>
        <end position="15"/>
    </location>
</feature>
<feature type="transmembrane region" description="Helical" evidence="2">
    <location>
        <begin position="16"/>
        <end position="33"/>
    </location>
</feature>
<feature type="topological domain" description="Mitochondrial intermembrane" evidence="1">
    <location>
        <begin position="34"/>
        <end position="106"/>
    </location>
</feature>
<feature type="region of interest" description="Disordered" evidence="3">
    <location>
        <begin position="81"/>
        <end position="106"/>
    </location>
</feature>
<feature type="splice variant" id="VSP_014603" description="In isoform 2." evidence="4 5">
    <original>KIKDSTFENWKNIRGPRPWEDPQLLQGRNPETLKPKTT</original>
    <variation>RLLCLLCRQ</variation>
    <location>
        <begin position="69"/>
        <end position="106"/>
    </location>
</feature>
<feature type="sequence conflict" description="In Ref. 1; BAC37796." evidence="6" ref="1">
    <original>R</original>
    <variation>Q</variation>
    <location>
        <position position="40"/>
    </location>
</feature>
<accession>Q9CR63</accession>
<accession>Q8BNX4</accession>
<accession>Q99J15</accession>